<accession>Q8IWL8</accession>
<accession>A1L3X7</accession>
<proteinExistence type="evidence at protein level"/>
<protein>
    <recommendedName>
        <fullName>Saitohin</fullName>
    </recommendedName>
</protein>
<comment type="subunit">
    <text evidence="5">Interacts with PRDX6.</text>
</comment>
<comment type="interaction">
    <interactant intactId="EBI-12843506">
        <id>Q8IWL8</id>
    </interactant>
    <interactant intactId="EBI-77613">
        <id>P05067</id>
        <label>APP</label>
    </interactant>
    <organismsDiffer>false</organismsDiffer>
    <experiments>3</experiments>
</comment>
<comment type="interaction">
    <interactant intactId="EBI-12843506">
        <id>Q8IWL8</id>
    </interactant>
    <interactant intactId="EBI-711360">
        <id>P33240</id>
        <label>CSTF2</label>
    </interactant>
    <organismsDiffer>false</organismsDiffer>
    <experiments>3</experiments>
</comment>
<comment type="interaction">
    <interactant intactId="EBI-12843506">
        <id>Q8IWL8</id>
    </interactant>
    <interactant intactId="EBI-747012">
        <id>Q9H0L4</id>
        <label>CSTF2T</label>
    </interactant>
    <organismsDiffer>false</organismsDiffer>
    <experiments>5</experiments>
</comment>
<comment type="interaction">
    <interactant intactId="EBI-12843506">
        <id>Q8IWL8</id>
    </interactant>
    <interactant intactId="EBI-725515">
        <id>O43559</id>
        <label>FRS3</label>
    </interactant>
    <organismsDiffer>false</organismsDiffer>
    <experiments>3</experiments>
</comment>
<comment type="interaction">
    <interactant intactId="EBI-12843506">
        <id>Q8IWL8</id>
    </interactant>
    <interactant intactId="EBI-2340269">
        <id>Q13064</id>
        <label>MKRN3</label>
    </interactant>
    <organismsDiffer>false</organismsDiffer>
    <experiments>3</experiments>
</comment>
<comment type="interaction">
    <interactant intactId="EBI-12843506">
        <id>Q8IWL8</id>
    </interactant>
    <interactant intactId="EBI-741158">
        <id>Q96HA8</id>
        <label>NTAQ1</label>
    </interactant>
    <organismsDiffer>false</organismsDiffer>
    <experiments>3</experiments>
</comment>
<comment type="interaction">
    <interactant intactId="EBI-12843506">
        <id>Q8IWL8</id>
    </interactant>
    <interactant intactId="EBI-724639">
        <id>Q9UBV8</id>
        <label>PEF1</label>
    </interactant>
    <organismsDiffer>false</organismsDiffer>
    <experiments>3</experiments>
</comment>
<comment type="interaction">
    <interactant intactId="EBI-12843506">
        <id>Q8IWL8</id>
    </interactant>
    <interactant intactId="EBI-748265">
        <id>P78337</id>
        <label>PITX1</label>
    </interactant>
    <organismsDiffer>false</organismsDiffer>
    <experiments>3</experiments>
</comment>
<comment type="interaction">
    <interactant intactId="EBI-12843506">
        <id>Q8IWL8</id>
    </interactant>
    <interactant intactId="EBI-1389308">
        <id>Q7Z3K3</id>
        <label>POGZ</label>
    </interactant>
    <organismsDiffer>false</organismsDiffer>
    <experiments>3</experiments>
</comment>
<comment type="interaction">
    <interactant intactId="EBI-12843506">
        <id>Q8IWL8</id>
    </interactant>
    <interactant intactId="EBI-358489">
        <id>Q96GM5</id>
        <label>SMARCD1</label>
    </interactant>
    <organismsDiffer>false</organismsDiffer>
    <experiments>3</experiments>
</comment>
<comment type="interaction">
    <interactant intactId="EBI-12843506">
        <id>Q8IWL8</id>
    </interactant>
    <interactant intactId="EBI-766589">
        <id>P09234</id>
        <label>SNRPC</label>
    </interactant>
    <organismsDiffer>false</organismsDiffer>
    <experiments>3</experiments>
</comment>
<comment type="interaction">
    <interactant intactId="EBI-12843506">
        <id>Q8IWL8</id>
    </interactant>
    <interactant intactId="EBI-12288855">
        <id>Q5JUK2</id>
        <label>SOHLH1</label>
    </interactant>
    <organismsDiffer>false</organismsDiffer>
    <experiments>3</experiments>
</comment>
<comment type="interaction">
    <interactant intactId="EBI-12843506">
        <id>Q8IWL8</id>
    </interactant>
    <interactant intactId="EBI-3921347">
        <id>P51687</id>
        <label>SUOX</label>
    </interactant>
    <organismsDiffer>false</organismsDiffer>
    <experiments>3</experiments>
</comment>
<comment type="interaction">
    <interactant intactId="EBI-12843506">
        <id>Q8IWL8</id>
    </interactant>
    <interactant intactId="EBI-357061">
        <id>Q92734</id>
        <label>TFG</label>
    </interactant>
    <organismsDiffer>false</organismsDiffer>
    <experiments>3</experiments>
</comment>
<comment type="interaction">
    <interactant intactId="EBI-12843506">
        <id>Q8IWL8</id>
    </interactant>
    <interactant intactId="EBI-3939165">
        <id>O43711</id>
        <label>TLX3</label>
    </interactant>
    <organismsDiffer>false</organismsDiffer>
    <experiments>5</experiments>
</comment>
<comment type="interaction">
    <interactant intactId="EBI-12843506">
        <id>Q8IWL8</id>
    </interactant>
    <interactant intactId="EBI-2559305">
        <id>A5D8V6</id>
        <label>VPS37C</label>
    </interactant>
    <organismsDiffer>false</organismsDiffer>
    <experiments>3</experiments>
</comment>
<comment type="subcellular location">
    <subcellularLocation>
        <location evidence="5">Cytoplasm</location>
    </subcellularLocation>
    <subcellularLocation>
        <location evidence="5">Nucleus</location>
    </subcellularLocation>
</comment>
<comment type="tissue specificity">
    <text evidence="2">Highest expression in placenta, muscle, fetal brain, and adult brain, with lower expression in heart, kidney, stomach, testis, and adrenal gland. In the central nervous system, highest expression is in temporal lobe, hypothalamus, medulla and spinal cord, with lower expression in other brain regions.</text>
</comment>
<comment type="polymorphism">
    <text evidence="4">The Arg-7 polymorphism may be associated with progressive supranuclear palsy.</text>
</comment>
<comment type="miscellaneous">
    <text>Was called 'saitohin' in honor of the late Tsuanao Saitoh and his laboratory.</text>
</comment>
<keyword id="KW-0963">Cytoplasm</keyword>
<keyword id="KW-0539">Nucleus</keyword>
<keyword id="KW-1185">Reference proteome</keyword>
<organism>
    <name type="scientific">Homo sapiens</name>
    <name type="common">Human</name>
    <dbReference type="NCBI Taxonomy" id="9606"/>
    <lineage>
        <taxon>Eukaryota</taxon>
        <taxon>Metazoa</taxon>
        <taxon>Chordata</taxon>
        <taxon>Craniata</taxon>
        <taxon>Vertebrata</taxon>
        <taxon>Euteleostomi</taxon>
        <taxon>Mammalia</taxon>
        <taxon>Eutheria</taxon>
        <taxon>Euarchontoglires</taxon>
        <taxon>Primates</taxon>
        <taxon>Haplorrhini</taxon>
        <taxon>Catarrhini</taxon>
        <taxon>Hominidae</taxon>
        <taxon>Homo</taxon>
    </lineage>
</organism>
<feature type="chain" id="PRO_0000072272" description="Saitohin">
    <location>
        <begin position="1"/>
        <end position="128"/>
    </location>
</feature>
<feature type="region of interest" description="Disordered" evidence="1">
    <location>
        <begin position="77"/>
        <end position="128"/>
    </location>
</feature>
<feature type="sequence variant" id="VAR_019548" description="In dbSNP:rs62063857." evidence="2 3 4">
    <original>Q</original>
    <variation>R</variation>
    <location>
        <position position="7"/>
    </location>
</feature>
<name>STH_HUMAN</name>
<sequence>MSEGGGQVSCIFAAPTRLCRWPALIECGVNLTQPLCEWMIQVARDRTLSLAWEVASLLTLSSSEVGLEGVGTIWPSSYSSEESSRNGAEQGRQLSIEGPFQGQNCPSHPAAALPLPMRGESQATSCQV</sequence>
<evidence type="ECO:0000256" key="1">
    <source>
        <dbReference type="SAM" id="MobiDB-lite"/>
    </source>
</evidence>
<evidence type="ECO:0000269" key="2">
    <source>
    </source>
</evidence>
<evidence type="ECO:0000269" key="3">
    <source>
    </source>
</evidence>
<evidence type="ECO:0000269" key="4">
    <source>
    </source>
</evidence>
<evidence type="ECO:0000269" key="5">
    <source>
    </source>
</evidence>
<reference key="1">
    <citation type="journal article" date="2002" name="Proc. Natl. Acad. Sci. U.S.A.">
        <title>A polymorphic gene nested within an intron of the tau gene: implications for Alzheimer's disease.</title>
        <authorList>
            <person name="Conrad C."/>
            <person name="Vianna C."/>
            <person name="Freeman M."/>
            <person name="Davies P."/>
        </authorList>
    </citation>
    <scope>NUCLEOTIDE SEQUENCE [MRNA]</scope>
    <scope>VARIANT ARG-7</scope>
    <scope>TISSUE SPECIFICITY</scope>
</reference>
<reference key="2">
    <citation type="journal article" date="2004" name="Genome Res.">
        <title>The status, quality, and expansion of the NIH full-length cDNA project: the Mammalian Gene Collection (MGC).</title>
        <authorList>
            <consortium name="The MGC Project Team"/>
        </authorList>
    </citation>
    <scope>NUCLEOTIDE SEQUENCE [LARGE SCALE MRNA]</scope>
</reference>
<reference key="3">
    <citation type="journal article" date="2005" name="J. Biol. Chem.">
        <title>Saitohin, which is nested in the tau locus and confers allele-specific susceptibility to several neurodegenerative diseases, interacts with peroxiredoxin 6.</title>
        <authorList>
            <person name="Gao L."/>
            <person name="Tse S.-W."/>
            <person name="Conrad C."/>
            <person name="Andreadis A."/>
        </authorList>
    </citation>
    <scope>SUBCELLULAR LOCATION</scope>
    <scope>INTERACTION WITH PRDX6</scope>
</reference>
<reference key="4">
    <citation type="journal article" date="2002" name="Ann. Neurol.">
        <title>No evidence for an association between Saitohin Q7R polymorphism and Alzheimer's disease.</title>
        <authorList>
            <person name="Cook L."/>
            <person name="Brayne C.E."/>
            <person name="Easton D."/>
            <person name="Evans J.G."/>
            <person name="Xuereb J."/>
            <person name="Cairns N.J."/>
            <person name="Rubinsztein D.C."/>
        </authorList>
    </citation>
    <scope>VARIANT ARG-7</scope>
</reference>
<reference key="5">
    <citation type="journal article" date="2003" name="Neurology">
        <title>Strong association of the Saitohin gene Q7 variant with progressive supranuclear palsy.</title>
        <authorList>
            <person name="de Silva R."/>
            <person name="Hope A."/>
            <person name="Pittman A."/>
            <person name="Weale M.E."/>
            <person name="Morris H.R."/>
            <person name="Wood N.W."/>
            <person name="Lees A.J."/>
        </authorList>
    </citation>
    <scope>VARIANT ARG-7</scope>
</reference>
<dbReference type="EMBL" id="AY179170">
    <property type="protein sequence ID" value="AAO03577.1"/>
    <property type="molecule type" value="mRNA"/>
</dbReference>
<dbReference type="EMBL" id="BC130319">
    <property type="protein sequence ID" value="AAI30320.1"/>
    <property type="molecule type" value="mRNA"/>
</dbReference>
<dbReference type="EMBL" id="BC130321">
    <property type="protein sequence ID" value="AAI30322.1"/>
    <property type="molecule type" value="mRNA"/>
</dbReference>
<dbReference type="CCDS" id="CCDS54136.1"/>
<dbReference type="RefSeq" id="NP_001007533.1">
    <property type="nucleotide sequence ID" value="NM_001007532.3"/>
</dbReference>
<dbReference type="BioGRID" id="128918">
    <property type="interactions" value="17"/>
</dbReference>
<dbReference type="FunCoup" id="Q8IWL8">
    <property type="interactions" value="3"/>
</dbReference>
<dbReference type="IntAct" id="Q8IWL8">
    <property type="interactions" value="16"/>
</dbReference>
<dbReference type="STRING" id="9606.ENSP00000443168"/>
<dbReference type="GlyGen" id="Q8IWL8">
    <property type="glycosylation" value="1 site, 1 O-linked glycan (1 site)"/>
</dbReference>
<dbReference type="iPTMnet" id="Q8IWL8"/>
<dbReference type="PhosphoSitePlus" id="Q8IWL8"/>
<dbReference type="BioMuta" id="STH"/>
<dbReference type="MassIVE" id="Q8IWL8"/>
<dbReference type="PaxDb" id="9606-ENSP00000443168"/>
<dbReference type="Antibodypedia" id="57558">
    <property type="antibodies" value="68 antibodies from 8 providers"/>
</dbReference>
<dbReference type="DNASU" id="246744"/>
<dbReference type="Ensembl" id="ENST00000537309.1">
    <property type="protein sequence ID" value="ENSP00000443168.1"/>
    <property type="gene ID" value="ENSG00000256762.1"/>
</dbReference>
<dbReference type="GeneID" id="246744"/>
<dbReference type="KEGG" id="hsa:246744"/>
<dbReference type="MANE-Select" id="ENST00000537309.1">
    <property type="protein sequence ID" value="ENSP00000443168.1"/>
    <property type="RefSeq nucleotide sequence ID" value="NM_001007532.3"/>
    <property type="RefSeq protein sequence ID" value="NP_001007533.1"/>
</dbReference>
<dbReference type="UCSC" id="uc002ijy.2">
    <property type="organism name" value="human"/>
</dbReference>
<dbReference type="AGR" id="HGNC:18839"/>
<dbReference type="CTD" id="246744"/>
<dbReference type="DisGeNET" id="246744"/>
<dbReference type="GeneCards" id="STH"/>
<dbReference type="HGNC" id="HGNC:18839">
    <property type="gene designation" value="STH"/>
</dbReference>
<dbReference type="HPA" id="ENSG00000256762">
    <property type="expression patterns" value="Tissue enhanced (brain)"/>
</dbReference>
<dbReference type="MIM" id="607067">
    <property type="type" value="gene"/>
</dbReference>
<dbReference type="neXtProt" id="NX_Q8IWL8"/>
<dbReference type="OpenTargets" id="ENSG00000256762"/>
<dbReference type="PharmGKB" id="PA162405011"/>
<dbReference type="VEuPathDB" id="HostDB:ENSG00000256762"/>
<dbReference type="eggNOG" id="ENOG502TEQ0">
    <property type="taxonomic scope" value="Eukaryota"/>
</dbReference>
<dbReference type="GeneTree" id="ENSGT00910000148294"/>
<dbReference type="HOGENOM" id="CLU_1958835_0_0_1"/>
<dbReference type="InParanoid" id="Q8IWL8"/>
<dbReference type="OMA" id="WMIQVAR"/>
<dbReference type="OrthoDB" id="9480568at2759"/>
<dbReference type="PAN-GO" id="Q8IWL8">
    <property type="GO annotations" value="0 GO annotations based on evolutionary models"/>
</dbReference>
<dbReference type="PhylomeDB" id="Q8IWL8"/>
<dbReference type="PathwayCommons" id="Q8IWL8"/>
<dbReference type="SignaLink" id="Q8IWL8"/>
<dbReference type="BioGRID-ORCS" id="246744">
    <property type="hits" value="11 hits in 1135 CRISPR screens"/>
</dbReference>
<dbReference type="GeneWiki" id="STH_(gene)"/>
<dbReference type="GenomeRNAi" id="246744"/>
<dbReference type="Pharos" id="Q8IWL8">
    <property type="development level" value="Tbio"/>
</dbReference>
<dbReference type="PRO" id="PR:Q8IWL8"/>
<dbReference type="Proteomes" id="UP000005640">
    <property type="component" value="Chromosome 17"/>
</dbReference>
<dbReference type="RNAct" id="Q8IWL8">
    <property type="molecule type" value="protein"/>
</dbReference>
<dbReference type="Bgee" id="ENSG00000256762">
    <property type="expression patterns" value="Expressed in male germ line stem cell (sensu Vertebrata) in testis and 51 other cell types or tissues"/>
</dbReference>
<dbReference type="GO" id="GO:0005737">
    <property type="term" value="C:cytoplasm"/>
    <property type="evidence" value="ECO:0000314"/>
    <property type="project" value="UniProtKB"/>
</dbReference>
<dbReference type="GO" id="GO:0005829">
    <property type="term" value="C:cytosol"/>
    <property type="evidence" value="ECO:0000314"/>
    <property type="project" value="HPA"/>
</dbReference>
<dbReference type="GO" id="GO:0005794">
    <property type="term" value="C:Golgi apparatus"/>
    <property type="evidence" value="ECO:0000314"/>
    <property type="project" value="HPA"/>
</dbReference>
<dbReference type="GO" id="GO:0005654">
    <property type="term" value="C:nucleoplasm"/>
    <property type="evidence" value="ECO:0000314"/>
    <property type="project" value="HPA"/>
</dbReference>
<dbReference type="GO" id="GO:0005634">
    <property type="term" value="C:nucleus"/>
    <property type="evidence" value="ECO:0000314"/>
    <property type="project" value="UniProtKB"/>
</dbReference>
<dbReference type="GO" id="GO:0048471">
    <property type="term" value="C:perinuclear region of cytoplasm"/>
    <property type="evidence" value="ECO:0000314"/>
    <property type="project" value="UniProtKB"/>
</dbReference>
<dbReference type="GO" id="GO:0048026">
    <property type="term" value="P:positive regulation of mRNA splicing, via spliceosome"/>
    <property type="evidence" value="ECO:0000316"/>
    <property type="project" value="UniProtKB"/>
</dbReference>
<gene>
    <name type="primary">STH</name>
</gene>